<name>NORR_SALG2</name>
<keyword id="KW-0067">ATP-binding</keyword>
<keyword id="KW-0238">DNA-binding</keyword>
<keyword id="KW-0547">Nucleotide-binding</keyword>
<keyword id="KW-0597">Phosphoprotein</keyword>
<keyword id="KW-0804">Transcription</keyword>
<keyword id="KW-0805">Transcription regulation</keyword>
<dbReference type="EMBL" id="AM933173">
    <property type="protein sequence ID" value="CAR38551.1"/>
    <property type="molecule type" value="Genomic_DNA"/>
</dbReference>
<dbReference type="RefSeq" id="WP_000010800.1">
    <property type="nucleotide sequence ID" value="NC_011274.1"/>
</dbReference>
<dbReference type="SMR" id="B5RDG4"/>
<dbReference type="KEGG" id="seg:SG2742"/>
<dbReference type="HOGENOM" id="CLU_000445_125_2_6"/>
<dbReference type="UniPathway" id="UPA00638"/>
<dbReference type="Proteomes" id="UP000008321">
    <property type="component" value="Chromosome"/>
</dbReference>
<dbReference type="GO" id="GO:0005524">
    <property type="term" value="F:ATP binding"/>
    <property type="evidence" value="ECO:0007669"/>
    <property type="project" value="UniProtKB-UniRule"/>
</dbReference>
<dbReference type="GO" id="GO:0016887">
    <property type="term" value="F:ATP hydrolysis activity"/>
    <property type="evidence" value="ECO:0007669"/>
    <property type="project" value="InterPro"/>
</dbReference>
<dbReference type="GO" id="GO:0003677">
    <property type="term" value="F:DNA binding"/>
    <property type="evidence" value="ECO:0007669"/>
    <property type="project" value="UniProtKB-KW"/>
</dbReference>
<dbReference type="GO" id="GO:0003700">
    <property type="term" value="F:DNA-binding transcription factor activity"/>
    <property type="evidence" value="ECO:0007669"/>
    <property type="project" value="UniProtKB-UniRule"/>
</dbReference>
<dbReference type="GO" id="GO:0000160">
    <property type="term" value="P:phosphorelay signal transduction system"/>
    <property type="evidence" value="ECO:0007669"/>
    <property type="project" value="UniProtKB-UniRule"/>
</dbReference>
<dbReference type="CDD" id="cd00009">
    <property type="entry name" value="AAA"/>
    <property type="match status" value="1"/>
</dbReference>
<dbReference type="FunFam" id="1.10.8.60:FF:000045">
    <property type="entry name" value="Anaerobic nitric oxide reductase transcription regulator NorR"/>
    <property type="match status" value="1"/>
</dbReference>
<dbReference type="FunFam" id="3.30.450.40:FF:000021">
    <property type="entry name" value="Anaerobic nitric oxide reductase transcription regulator NorR"/>
    <property type="match status" value="1"/>
</dbReference>
<dbReference type="FunFam" id="3.40.50.300:FF:000006">
    <property type="entry name" value="DNA-binding transcriptional regulator NtrC"/>
    <property type="match status" value="1"/>
</dbReference>
<dbReference type="Gene3D" id="1.10.8.60">
    <property type="match status" value="1"/>
</dbReference>
<dbReference type="Gene3D" id="3.30.450.40">
    <property type="match status" value="1"/>
</dbReference>
<dbReference type="Gene3D" id="1.10.10.60">
    <property type="entry name" value="Homeodomain-like"/>
    <property type="match status" value="1"/>
</dbReference>
<dbReference type="Gene3D" id="3.40.50.300">
    <property type="entry name" value="P-loop containing nucleotide triphosphate hydrolases"/>
    <property type="match status" value="1"/>
</dbReference>
<dbReference type="HAMAP" id="MF_01314">
    <property type="entry name" value="NorR"/>
    <property type="match status" value="1"/>
</dbReference>
<dbReference type="InterPro" id="IPR003593">
    <property type="entry name" value="AAA+_ATPase"/>
</dbReference>
<dbReference type="InterPro" id="IPR003018">
    <property type="entry name" value="GAF"/>
</dbReference>
<dbReference type="InterPro" id="IPR029016">
    <property type="entry name" value="GAF-like_dom_sf"/>
</dbReference>
<dbReference type="InterPro" id="IPR009057">
    <property type="entry name" value="Homeodomain-like_sf"/>
</dbReference>
<dbReference type="InterPro" id="IPR023944">
    <property type="entry name" value="NorR"/>
</dbReference>
<dbReference type="InterPro" id="IPR027417">
    <property type="entry name" value="P-loop_NTPase"/>
</dbReference>
<dbReference type="InterPro" id="IPR002078">
    <property type="entry name" value="Sigma_54_int"/>
</dbReference>
<dbReference type="InterPro" id="IPR025662">
    <property type="entry name" value="Sigma_54_int_dom_ATP-bd_1"/>
</dbReference>
<dbReference type="InterPro" id="IPR025943">
    <property type="entry name" value="Sigma_54_int_dom_ATP-bd_2"/>
</dbReference>
<dbReference type="InterPro" id="IPR025944">
    <property type="entry name" value="Sigma_54_int_dom_CS"/>
</dbReference>
<dbReference type="NCBIfam" id="NF003451">
    <property type="entry name" value="PRK05022.1"/>
    <property type="match status" value="1"/>
</dbReference>
<dbReference type="PANTHER" id="PTHR32071:SF35">
    <property type="entry name" value="ANAEROBIC NITRIC OXIDE REDUCTASE TRANSCRIPTION REGULATOR NORR"/>
    <property type="match status" value="1"/>
</dbReference>
<dbReference type="PANTHER" id="PTHR32071">
    <property type="entry name" value="TRANSCRIPTIONAL REGULATORY PROTEIN"/>
    <property type="match status" value="1"/>
</dbReference>
<dbReference type="Pfam" id="PF01590">
    <property type="entry name" value="GAF"/>
    <property type="match status" value="1"/>
</dbReference>
<dbReference type="Pfam" id="PF00158">
    <property type="entry name" value="Sigma54_activat"/>
    <property type="match status" value="1"/>
</dbReference>
<dbReference type="SMART" id="SM00382">
    <property type="entry name" value="AAA"/>
    <property type="match status" value="1"/>
</dbReference>
<dbReference type="SMART" id="SM00065">
    <property type="entry name" value="GAF"/>
    <property type="match status" value="1"/>
</dbReference>
<dbReference type="SUPFAM" id="SSF55781">
    <property type="entry name" value="GAF domain-like"/>
    <property type="match status" value="1"/>
</dbReference>
<dbReference type="SUPFAM" id="SSF46689">
    <property type="entry name" value="Homeodomain-like"/>
    <property type="match status" value="1"/>
</dbReference>
<dbReference type="SUPFAM" id="SSF52540">
    <property type="entry name" value="P-loop containing nucleoside triphosphate hydrolases"/>
    <property type="match status" value="1"/>
</dbReference>
<dbReference type="PROSITE" id="PS00675">
    <property type="entry name" value="SIGMA54_INTERACT_1"/>
    <property type="match status" value="1"/>
</dbReference>
<dbReference type="PROSITE" id="PS00676">
    <property type="entry name" value="SIGMA54_INTERACT_2"/>
    <property type="match status" value="1"/>
</dbReference>
<dbReference type="PROSITE" id="PS00688">
    <property type="entry name" value="SIGMA54_INTERACT_3"/>
    <property type="match status" value="1"/>
</dbReference>
<dbReference type="PROSITE" id="PS50045">
    <property type="entry name" value="SIGMA54_INTERACT_4"/>
    <property type="match status" value="1"/>
</dbReference>
<accession>B5RDG4</accession>
<protein>
    <recommendedName>
        <fullName evidence="1">Anaerobic nitric oxide reductase transcription regulator NorR</fullName>
    </recommendedName>
</protein>
<evidence type="ECO:0000255" key="1">
    <source>
        <dbReference type="HAMAP-Rule" id="MF_01314"/>
    </source>
</evidence>
<proteinExistence type="inferred from homology"/>
<gene>
    <name evidence="1" type="primary">norR</name>
    <name type="ordered locus">SG2742</name>
</gene>
<comment type="function">
    <text evidence="1">Required for the expression of anaerobic nitric oxide (NO) reductase, acts as a transcriptional activator for at least the norVW operon. Activation also requires sigma-54.</text>
</comment>
<comment type="pathway">
    <text evidence="1">Nitrogen metabolism; nitric oxide reduction.</text>
</comment>
<feature type="chain" id="PRO_1000141199" description="Anaerobic nitric oxide reductase transcription regulator NorR">
    <location>
        <begin position="1"/>
        <end position="506"/>
    </location>
</feature>
<feature type="domain" description="Sigma-54 factor interaction" evidence="1">
    <location>
        <begin position="187"/>
        <end position="416"/>
    </location>
</feature>
<feature type="DNA-binding region" description="H-T-H motif" evidence="1">
    <location>
        <begin position="481"/>
        <end position="500"/>
    </location>
</feature>
<feature type="binding site" evidence="1">
    <location>
        <begin position="215"/>
        <end position="222"/>
    </location>
    <ligand>
        <name>ATP</name>
        <dbReference type="ChEBI" id="CHEBI:30616"/>
    </ligand>
</feature>
<feature type="binding site" evidence="1">
    <location>
        <begin position="278"/>
        <end position="287"/>
    </location>
    <ligand>
        <name>ATP</name>
        <dbReference type="ChEBI" id="CHEBI:30616"/>
    </ligand>
</feature>
<feature type="modified residue" description="4-aspartylphosphate" evidence="1">
    <location>
        <position position="57"/>
    </location>
</feature>
<sequence length="506" mass="55448">MSFSVEVLAGIAIELQRGIGHQDRFQRLITTLRQVLACDASALLRYESRQFIPLAIDGLAQDVLGRRFTLEGHPRLEAIARAGDVVRFPADSDLPDPYDGLIPGQESLKVHACVGLPLFAGQNLIGALTLDAMTPEQFEVFRDEELRLVAALAAGALSNALLIEQLESQNMLPGSSGVFEPIKETHMIGLSPAMTQLKKEIEIVAGSDLNVLIGGETGTGKELVAKAIHQGSPRAVNPLVYLNCAALPESVAESELFGHVKGAFTGAISNRSGKFEMADNGTLFLDEIGELSLALQAKLLRVLQYGDIQRVGDDRSLRVDVRVLAATNRDLREEVLAGRFRADLFHRLSVFPLFVPPLRERGDDVVLLAGYFCEQCRLRLGLSRVVLSPGARRHLLNYGWPGNVRELEHAIHRAVVLARATRAGDEVVLEEQHFALSEDVLPAPSAESFLALPACRNLRESTENFQREMIRQALAQNNHNWAASARALETDVANLHRLAKRLGLKD</sequence>
<organism>
    <name type="scientific">Salmonella gallinarum (strain 287/91 / NCTC 13346)</name>
    <dbReference type="NCBI Taxonomy" id="550538"/>
    <lineage>
        <taxon>Bacteria</taxon>
        <taxon>Pseudomonadati</taxon>
        <taxon>Pseudomonadota</taxon>
        <taxon>Gammaproteobacteria</taxon>
        <taxon>Enterobacterales</taxon>
        <taxon>Enterobacteriaceae</taxon>
        <taxon>Salmonella</taxon>
    </lineage>
</organism>
<reference key="1">
    <citation type="journal article" date="2008" name="Genome Res.">
        <title>Comparative genome analysis of Salmonella enteritidis PT4 and Salmonella gallinarum 287/91 provides insights into evolutionary and host adaptation pathways.</title>
        <authorList>
            <person name="Thomson N.R."/>
            <person name="Clayton D.J."/>
            <person name="Windhorst D."/>
            <person name="Vernikos G."/>
            <person name="Davidson S."/>
            <person name="Churcher C."/>
            <person name="Quail M.A."/>
            <person name="Stevens M."/>
            <person name="Jones M.A."/>
            <person name="Watson M."/>
            <person name="Barron A."/>
            <person name="Layton A."/>
            <person name="Pickard D."/>
            <person name="Kingsley R.A."/>
            <person name="Bignell A."/>
            <person name="Clark L."/>
            <person name="Harris B."/>
            <person name="Ormond D."/>
            <person name="Abdellah Z."/>
            <person name="Brooks K."/>
            <person name="Cherevach I."/>
            <person name="Chillingworth T."/>
            <person name="Woodward J."/>
            <person name="Norberczak H."/>
            <person name="Lord A."/>
            <person name="Arrowsmith C."/>
            <person name="Jagels K."/>
            <person name="Moule S."/>
            <person name="Mungall K."/>
            <person name="Saunders M."/>
            <person name="Whitehead S."/>
            <person name="Chabalgoity J.A."/>
            <person name="Maskell D."/>
            <person name="Humphreys T."/>
            <person name="Roberts M."/>
            <person name="Barrow P.A."/>
            <person name="Dougan G."/>
            <person name="Parkhill J."/>
        </authorList>
    </citation>
    <scope>NUCLEOTIDE SEQUENCE [LARGE SCALE GENOMIC DNA]</scope>
    <source>
        <strain>287/91 / NCTC 13346</strain>
    </source>
</reference>